<proteinExistence type="evidence at transcript level"/>
<accession>Q9SRX6</accession>
<evidence type="ECO:0000256" key="1">
    <source>
        <dbReference type="SAM" id="MobiDB-lite"/>
    </source>
</evidence>
<evidence type="ECO:0000269" key="2">
    <source>
    </source>
</evidence>
<evidence type="ECO:0000269" key="3">
    <source>
    </source>
</evidence>
<evidence type="ECO:0000303" key="4">
    <source>
    </source>
</evidence>
<evidence type="ECO:0000303" key="5">
    <source>
    </source>
</evidence>
<evidence type="ECO:0000305" key="6"/>
<evidence type="ECO:0000312" key="7">
    <source>
        <dbReference type="Araport" id="AT1G02820"/>
    </source>
</evidence>
<evidence type="ECO:0000312" key="8">
    <source>
        <dbReference type="EMBL" id="AAF02884.1"/>
    </source>
</evidence>
<name>LEA2_ARATH</name>
<gene>
    <name evidence="5" type="primary">LEA2</name>
    <name evidence="4" type="synonym">AtLEA3</name>
    <name evidence="7" type="ordered locus">At1g02820</name>
    <name evidence="8" type="ORF">F22D16.18</name>
</gene>
<feature type="chain" id="PRO_0000439763" description="Late embryogenis abundant protein 2">
    <location>
        <begin position="1"/>
        <end position="91"/>
    </location>
</feature>
<feature type="region of interest" description="Disordered" evidence="1">
    <location>
        <begin position="47"/>
        <end position="72"/>
    </location>
</feature>
<sequence length="91" mass="9827">MARSLANAKIQSVFGSEKLSNAVFRRGFAAAAKTALDGSVSTAEMKKRAGEASSEKAPWVPDPKTGYYRPETVSEEIDPAELRAILLNNKQ</sequence>
<dbReference type="EMBL" id="AC009525">
    <property type="protein sequence ID" value="AAF02884.1"/>
    <property type="molecule type" value="Genomic_DNA"/>
</dbReference>
<dbReference type="EMBL" id="CP002684">
    <property type="protein sequence ID" value="AEE27475.1"/>
    <property type="molecule type" value="Genomic_DNA"/>
</dbReference>
<dbReference type="EMBL" id="AK176747">
    <property type="protein sequence ID" value="BAD44510.1"/>
    <property type="molecule type" value="mRNA"/>
</dbReference>
<dbReference type="EMBL" id="BT024641">
    <property type="protein sequence ID" value="ABD57466.1"/>
    <property type="molecule type" value="mRNA"/>
</dbReference>
<dbReference type="EMBL" id="AY088824">
    <property type="protein sequence ID" value="AAM67133.1"/>
    <property type="molecule type" value="mRNA"/>
</dbReference>
<dbReference type="PIR" id="D86158">
    <property type="entry name" value="D86158"/>
</dbReference>
<dbReference type="RefSeq" id="NP_171781.1">
    <property type="nucleotide sequence ID" value="NM_100163.3"/>
</dbReference>
<dbReference type="FunCoup" id="Q9SRX6">
    <property type="interactions" value="112"/>
</dbReference>
<dbReference type="STRING" id="3702.Q9SRX6"/>
<dbReference type="PaxDb" id="3702-AT1G02820.1"/>
<dbReference type="ProteomicsDB" id="230209"/>
<dbReference type="EnsemblPlants" id="AT1G02820.1">
    <property type="protein sequence ID" value="AT1G02820.1"/>
    <property type="gene ID" value="AT1G02820"/>
</dbReference>
<dbReference type="GeneID" id="839304"/>
<dbReference type="Gramene" id="AT1G02820.1">
    <property type="protein sequence ID" value="AT1G02820.1"/>
    <property type="gene ID" value="AT1G02820"/>
</dbReference>
<dbReference type="KEGG" id="ath:AT1G02820"/>
<dbReference type="Araport" id="AT1G02820"/>
<dbReference type="TAIR" id="AT1G02820">
    <property type="gene designation" value="LEA3"/>
</dbReference>
<dbReference type="eggNOG" id="ENOG502S70H">
    <property type="taxonomic scope" value="Eukaryota"/>
</dbReference>
<dbReference type="HOGENOM" id="CLU_158380_1_1_1"/>
<dbReference type="InParanoid" id="Q9SRX6"/>
<dbReference type="OMA" id="ASETIYW"/>
<dbReference type="PhylomeDB" id="Q9SRX6"/>
<dbReference type="PRO" id="PR:Q9SRX6"/>
<dbReference type="Proteomes" id="UP000006548">
    <property type="component" value="Chromosome 1"/>
</dbReference>
<dbReference type="ExpressionAtlas" id="Q9SRX6">
    <property type="expression patterns" value="baseline and differential"/>
</dbReference>
<dbReference type="GO" id="GO:0005829">
    <property type="term" value="C:cytosol"/>
    <property type="evidence" value="ECO:0007005"/>
    <property type="project" value="TAIR"/>
</dbReference>
<dbReference type="GO" id="GO:0005634">
    <property type="term" value="C:nucleus"/>
    <property type="evidence" value="ECO:0000314"/>
    <property type="project" value="UniProtKB"/>
</dbReference>
<dbReference type="GO" id="GO:0009651">
    <property type="term" value="P:response to salt stress"/>
    <property type="evidence" value="ECO:0000270"/>
    <property type="project" value="UniProtKB"/>
</dbReference>
<dbReference type="GO" id="GO:0009414">
    <property type="term" value="P:response to water deprivation"/>
    <property type="evidence" value="ECO:0000270"/>
    <property type="project" value="UniProtKB"/>
</dbReference>
<dbReference type="InterPro" id="IPR004926">
    <property type="entry name" value="LEA_3a"/>
</dbReference>
<dbReference type="PANTHER" id="PTHR33509:SF39">
    <property type="entry name" value="LATE EMBRYOGENIS ABUNDANT PROTEIN 2"/>
    <property type="match status" value="1"/>
</dbReference>
<dbReference type="PANTHER" id="PTHR33509">
    <property type="entry name" value="LATE EMBRYOGENIS ABUNDANT PROTEIN 2-RELATED"/>
    <property type="match status" value="1"/>
</dbReference>
<dbReference type="Pfam" id="PF03242">
    <property type="entry name" value="LEA_3a"/>
    <property type="match status" value="1"/>
</dbReference>
<comment type="subcellular location">
    <subcellularLocation>
        <location evidence="3">Cytoplasm</location>
    </subcellularLocation>
    <subcellularLocation>
        <location evidence="3">Nucleus</location>
    </subcellularLocation>
</comment>
<comment type="induction">
    <text evidence="2">By salinity and drought stresses.</text>
</comment>
<comment type="similarity">
    <text evidence="6">Belongs to the LEA type 3 family.</text>
</comment>
<reference key="1">
    <citation type="journal article" date="2000" name="Nature">
        <title>Sequence and analysis of chromosome 1 of the plant Arabidopsis thaliana.</title>
        <authorList>
            <person name="Theologis A."/>
            <person name="Ecker J.R."/>
            <person name="Palm C.J."/>
            <person name="Federspiel N.A."/>
            <person name="Kaul S."/>
            <person name="White O."/>
            <person name="Alonso J."/>
            <person name="Altafi H."/>
            <person name="Araujo R."/>
            <person name="Bowman C.L."/>
            <person name="Brooks S.Y."/>
            <person name="Buehler E."/>
            <person name="Chan A."/>
            <person name="Chao Q."/>
            <person name="Chen H."/>
            <person name="Cheuk R.F."/>
            <person name="Chin C.W."/>
            <person name="Chung M.K."/>
            <person name="Conn L."/>
            <person name="Conway A.B."/>
            <person name="Conway A.R."/>
            <person name="Creasy T.H."/>
            <person name="Dewar K."/>
            <person name="Dunn P."/>
            <person name="Etgu P."/>
            <person name="Feldblyum T.V."/>
            <person name="Feng J.-D."/>
            <person name="Fong B."/>
            <person name="Fujii C.Y."/>
            <person name="Gill J.E."/>
            <person name="Goldsmith A.D."/>
            <person name="Haas B."/>
            <person name="Hansen N.F."/>
            <person name="Hughes B."/>
            <person name="Huizar L."/>
            <person name="Hunter J.L."/>
            <person name="Jenkins J."/>
            <person name="Johnson-Hopson C."/>
            <person name="Khan S."/>
            <person name="Khaykin E."/>
            <person name="Kim C.J."/>
            <person name="Koo H.L."/>
            <person name="Kremenetskaia I."/>
            <person name="Kurtz D.B."/>
            <person name="Kwan A."/>
            <person name="Lam B."/>
            <person name="Langin-Hooper S."/>
            <person name="Lee A."/>
            <person name="Lee J.M."/>
            <person name="Lenz C.A."/>
            <person name="Li J.H."/>
            <person name="Li Y.-P."/>
            <person name="Lin X."/>
            <person name="Liu S.X."/>
            <person name="Liu Z.A."/>
            <person name="Luros J.S."/>
            <person name="Maiti R."/>
            <person name="Marziali A."/>
            <person name="Militscher J."/>
            <person name="Miranda M."/>
            <person name="Nguyen M."/>
            <person name="Nierman W.C."/>
            <person name="Osborne B.I."/>
            <person name="Pai G."/>
            <person name="Peterson J."/>
            <person name="Pham P.K."/>
            <person name="Rizzo M."/>
            <person name="Rooney T."/>
            <person name="Rowley D."/>
            <person name="Sakano H."/>
            <person name="Salzberg S.L."/>
            <person name="Schwartz J.R."/>
            <person name="Shinn P."/>
            <person name="Southwick A.M."/>
            <person name="Sun H."/>
            <person name="Tallon L.J."/>
            <person name="Tambunga G."/>
            <person name="Toriumi M.J."/>
            <person name="Town C.D."/>
            <person name="Utterback T."/>
            <person name="Van Aken S."/>
            <person name="Vaysberg M."/>
            <person name="Vysotskaia V.S."/>
            <person name="Walker M."/>
            <person name="Wu D."/>
            <person name="Yu G."/>
            <person name="Fraser C.M."/>
            <person name="Venter J.C."/>
            <person name="Davis R.W."/>
        </authorList>
    </citation>
    <scope>NUCLEOTIDE SEQUENCE [LARGE SCALE GENOMIC DNA]</scope>
    <source>
        <strain>cv. Columbia</strain>
    </source>
</reference>
<reference key="2">
    <citation type="journal article" date="2017" name="Plant J.">
        <title>Araport11: a complete reannotation of the Arabidopsis thaliana reference genome.</title>
        <authorList>
            <person name="Cheng C.Y."/>
            <person name="Krishnakumar V."/>
            <person name="Chan A.P."/>
            <person name="Thibaud-Nissen F."/>
            <person name="Schobel S."/>
            <person name="Town C.D."/>
        </authorList>
    </citation>
    <scope>GENOME REANNOTATION</scope>
    <source>
        <strain>cv. Columbia</strain>
    </source>
</reference>
<reference key="3">
    <citation type="submission" date="2004-09" db="EMBL/GenBank/DDBJ databases">
        <title>Large-scale analysis of RIKEN Arabidopsis full-length (RAFL) cDNAs.</title>
        <authorList>
            <person name="Totoki Y."/>
            <person name="Seki M."/>
            <person name="Ishida J."/>
            <person name="Nakajima M."/>
            <person name="Enju A."/>
            <person name="Kamiya A."/>
            <person name="Narusaka M."/>
            <person name="Shin-i T."/>
            <person name="Nakagawa M."/>
            <person name="Sakamoto N."/>
            <person name="Oishi K."/>
            <person name="Kohara Y."/>
            <person name="Kobayashi M."/>
            <person name="Toyoda A."/>
            <person name="Sakaki Y."/>
            <person name="Sakurai T."/>
            <person name="Iida K."/>
            <person name="Akiyama K."/>
            <person name="Satou M."/>
            <person name="Toyoda T."/>
            <person name="Konagaya A."/>
            <person name="Carninci P."/>
            <person name="Kawai J."/>
            <person name="Hayashizaki Y."/>
            <person name="Shinozaki K."/>
        </authorList>
    </citation>
    <scope>NUCLEOTIDE SEQUENCE [LARGE SCALE MRNA]</scope>
    <source>
        <strain>cv. Columbia</strain>
    </source>
</reference>
<reference key="4">
    <citation type="submission" date="2006-02" db="EMBL/GenBank/DDBJ databases">
        <title>Arabidopsis ORF clones.</title>
        <authorList>
            <person name="Shinn P."/>
            <person name="Chen H."/>
            <person name="Kim C.J."/>
            <person name="Ecker J.R."/>
        </authorList>
    </citation>
    <scope>NUCLEOTIDE SEQUENCE [LARGE SCALE MRNA]</scope>
    <source>
        <strain>cv. Columbia</strain>
    </source>
</reference>
<reference key="5">
    <citation type="submission" date="2002-03" db="EMBL/GenBank/DDBJ databases">
        <title>Full-length cDNA from Arabidopsis thaliana.</title>
        <authorList>
            <person name="Brover V.V."/>
            <person name="Troukhan M.E."/>
            <person name="Alexandrov N.A."/>
            <person name="Lu Y.-P."/>
            <person name="Flavell R.B."/>
            <person name="Feldmann K.A."/>
        </authorList>
    </citation>
    <scope>NUCLEOTIDE SEQUENCE [LARGE SCALE MRNA]</scope>
</reference>
<reference key="6">
    <citation type="journal article" date="2008" name="BMC Genomics">
        <title>LEA (late embryogenesis abundant) proteins and their encoding genes in Arabidopsis thaliana.</title>
        <authorList>
            <person name="Hundertmark M."/>
            <person name="Hincha D.K."/>
        </authorList>
    </citation>
    <scope>GENE FAMILY</scope>
</reference>
<reference key="7">
    <citation type="journal article" date="2012" name="Planta">
        <title>The heterologous expression in Arabidopsis of a chrysanthemum Cys2/His2 zinc finger protein gene confers salinity and drought tolerance.</title>
        <authorList>
            <person name="Gao H."/>
            <person name="Song A."/>
            <person name="Zhu X."/>
            <person name="Chen F."/>
            <person name="Jiang J."/>
            <person name="Chen Y."/>
            <person name="Sun Y."/>
            <person name="Shan H."/>
            <person name="Gu C."/>
            <person name="Li P."/>
            <person name="Chen S."/>
        </authorList>
    </citation>
    <scope>INDUCTION BY SALINITY STRESS AND DROUGHT</scope>
</reference>
<reference key="8">
    <citation type="journal article" date="2014" name="Plant Cell">
        <title>The ubiquitous distribution of late embryogenesis abundant proteins across cell compartments in Arabidopsis offers tailored protection against abiotic stress.</title>
        <authorList>
            <person name="Candat A."/>
            <person name="Paszkiewicz G."/>
            <person name="Neveu M."/>
            <person name="Gautier R."/>
            <person name="Logan D.C."/>
            <person name="Avelange-Macherel M.-H."/>
            <person name="Macherel D."/>
        </authorList>
    </citation>
    <scope>SUBCELLULAR LOCATION</scope>
    <scope>GENE FAMILY</scope>
    <scope>NOMENCLATURE</scope>
</reference>
<protein>
    <recommendedName>
        <fullName evidence="5">Late embryogenis abundant protein 2</fullName>
    </recommendedName>
</protein>
<keyword id="KW-0963">Cytoplasm</keyword>
<keyword id="KW-0539">Nucleus</keyword>
<keyword id="KW-1185">Reference proteome</keyword>
<keyword id="KW-0346">Stress response</keyword>
<organism>
    <name type="scientific">Arabidopsis thaliana</name>
    <name type="common">Mouse-ear cress</name>
    <dbReference type="NCBI Taxonomy" id="3702"/>
    <lineage>
        <taxon>Eukaryota</taxon>
        <taxon>Viridiplantae</taxon>
        <taxon>Streptophyta</taxon>
        <taxon>Embryophyta</taxon>
        <taxon>Tracheophyta</taxon>
        <taxon>Spermatophyta</taxon>
        <taxon>Magnoliopsida</taxon>
        <taxon>eudicotyledons</taxon>
        <taxon>Gunneridae</taxon>
        <taxon>Pentapetalae</taxon>
        <taxon>rosids</taxon>
        <taxon>malvids</taxon>
        <taxon>Brassicales</taxon>
        <taxon>Brassicaceae</taxon>
        <taxon>Camelineae</taxon>
        <taxon>Arabidopsis</taxon>
    </lineage>
</organism>